<gene>
    <name evidence="1" type="primary">glcB</name>
    <name type="ordered locus">Mkms_2861</name>
</gene>
<comment type="function">
    <text evidence="1">Involved in the glycolate utilization. Catalyzes the condensation and subsequent hydrolysis of acetyl-coenzyme A (acetyl-CoA) and glyoxylate to form malate and CoA.</text>
</comment>
<comment type="catalytic activity">
    <reaction evidence="1">
        <text>glyoxylate + acetyl-CoA + H2O = (S)-malate + CoA + H(+)</text>
        <dbReference type="Rhea" id="RHEA:18181"/>
        <dbReference type="ChEBI" id="CHEBI:15377"/>
        <dbReference type="ChEBI" id="CHEBI:15378"/>
        <dbReference type="ChEBI" id="CHEBI:15589"/>
        <dbReference type="ChEBI" id="CHEBI:36655"/>
        <dbReference type="ChEBI" id="CHEBI:57287"/>
        <dbReference type="ChEBI" id="CHEBI:57288"/>
        <dbReference type="EC" id="2.3.3.9"/>
    </reaction>
</comment>
<comment type="cofactor">
    <cofactor evidence="1">
        <name>Mg(2+)</name>
        <dbReference type="ChEBI" id="CHEBI:18420"/>
    </cofactor>
</comment>
<comment type="pathway">
    <text evidence="1">Carbohydrate metabolism; glyoxylate cycle; (S)-malate from isocitrate: step 2/2.</text>
</comment>
<comment type="subunit">
    <text evidence="1">Monomer.</text>
</comment>
<comment type="subcellular location">
    <subcellularLocation>
        <location evidence="1">Cytoplasm</location>
    </subcellularLocation>
</comment>
<comment type="similarity">
    <text evidence="1">Belongs to the malate synthase family. GlcB subfamily.</text>
</comment>
<evidence type="ECO:0000255" key="1">
    <source>
        <dbReference type="HAMAP-Rule" id="MF_00641"/>
    </source>
</evidence>
<protein>
    <recommendedName>
        <fullName evidence="1">Malate synthase G</fullName>
        <ecNumber evidence="1">2.3.3.9</ecNumber>
    </recommendedName>
</protein>
<keyword id="KW-0963">Cytoplasm</keyword>
<keyword id="KW-0329">Glyoxylate bypass</keyword>
<keyword id="KW-0460">Magnesium</keyword>
<keyword id="KW-0479">Metal-binding</keyword>
<keyword id="KW-0558">Oxidation</keyword>
<keyword id="KW-0808">Transferase</keyword>
<keyword id="KW-0816">Tricarboxylic acid cycle</keyword>
<accession>A1UGU7</accession>
<organism>
    <name type="scientific">Mycobacterium sp. (strain KMS)</name>
    <dbReference type="NCBI Taxonomy" id="189918"/>
    <lineage>
        <taxon>Bacteria</taxon>
        <taxon>Bacillati</taxon>
        <taxon>Actinomycetota</taxon>
        <taxon>Actinomycetes</taxon>
        <taxon>Mycobacteriales</taxon>
        <taxon>Mycobacteriaceae</taxon>
        <taxon>Mycobacterium</taxon>
    </lineage>
</organism>
<dbReference type="EC" id="2.3.3.9" evidence="1"/>
<dbReference type="EMBL" id="CP000518">
    <property type="protein sequence ID" value="ABL92055.1"/>
    <property type="molecule type" value="Genomic_DNA"/>
</dbReference>
<dbReference type="SMR" id="A1UGU7"/>
<dbReference type="STRING" id="189918.Mkms_2861"/>
<dbReference type="KEGG" id="mkm:Mkms_2861"/>
<dbReference type="HOGENOM" id="CLU_028446_1_0_11"/>
<dbReference type="OrthoDB" id="9762054at2"/>
<dbReference type="UniPathway" id="UPA00703">
    <property type="reaction ID" value="UER00720"/>
</dbReference>
<dbReference type="GO" id="GO:0005829">
    <property type="term" value="C:cytosol"/>
    <property type="evidence" value="ECO:0007669"/>
    <property type="project" value="TreeGrafter"/>
</dbReference>
<dbReference type="GO" id="GO:0000287">
    <property type="term" value="F:magnesium ion binding"/>
    <property type="evidence" value="ECO:0007669"/>
    <property type="project" value="TreeGrafter"/>
</dbReference>
<dbReference type="GO" id="GO:0004474">
    <property type="term" value="F:malate synthase activity"/>
    <property type="evidence" value="ECO:0007669"/>
    <property type="project" value="UniProtKB-UniRule"/>
</dbReference>
<dbReference type="GO" id="GO:0009436">
    <property type="term" value="P:glyoxylate catabolic process"/>
    <property type="evidence" value="ECO:0007669"/>
    <property type="project" value="TreeGrafter"/>
</dbReference>
<dbReference type="GO" id="GO:0006097">
    <property type="term" value="P:glyoxylate cycle"/>
    <property type="evidence" value="ECO:0007669"/>
    <property type="project" value="UniProtKB-UniRule"/>
</dbReference>
<dbReference type="GO" id="GO:0006099">
    <property type="term" value="P:tricarboxylic acid cycle"/>
    <property type="evidence" value="ECO:0007669"/>
    <property type="project" value="UniProtKB-KW"/>
</dbReference>
<dbReference type="CDD" id="cd00728">
    <property type="entry name" value="malate_synt_G"/>
    <property type="match status" value="1"/>
</dbReference>
<dbReference type="FunFam" id="3.20.20.360:FF:000002">
    <property type="entry name" value="Malate synthase G"/>
    <property type="match status" value="1"/>
</dbReference>
<dbReference type="Gene3D" id="3.20.20.360">
    <property type="entry name" value="Malate synthase, domain 3"/>
    <property type="match status" value="2"/>
</dbReference>
<dbReference type="Gene3D" id="1.20.1220.12">
    <property type="entry name" value="Malate synthase, domain III"/>
    <property type="match status" value="1"/>
</dbReference>
<dbReference type="HAMAP" id="MF_00641">
    <property type="entry name" value="Malate_synth_G"/>
    <property type="match status" value="1"/>
</dbReference>
<dbReference type="InterPro" id="IPR044856">
    <property type="entry name" value="Malate_synth_C_sf"/>
</dbReference>
<dbReference type="InterPro" id="IPR011076">
    <property type="entry name" value="Malate_synth_sf"/>
</dbReference>
<dbReference type="InterPro" id="IPR001465">
    <property type="entry name" value="Malate_synthase_TIM"/>
</dbReference>
<dbReference type="InterPro" id="IPR006253">
    <property type="entry name" value="Malate_synthG"/>
</dbReference>
<dbReference type="InterPro" id="IPR048355">
    <property type="entry name" value="MS_C"/>
</dbReference>
<dbReference type="InterPro" id="IPR048356">
    <property type="entry name" value="MS_N"/>
</dbReference>
<dbReference type="InterPro" id="IPR046363">
    <property type="entry name" value="MS_N_TIM-barrel_dom"/>
</dbReference>
<dbReference type="InterPro" id="IPR048357">
    <property type="entry name" value="MSG_insertion"/>
</dbReference>
<dbReference type="NCBIfam" id="TIGR01345">
    <property type="entry name" value="malate_syn_G"/>
    <property type="match status" value="1"/>
</dbReference>
<dbReference type="NCBIfam" id="NF002825">
    <property type="entry name" value="PRK02999.1"/>
    <property type="match status" value="1"/>
</dbReference>
<dbReference type="PANTHER" id="PTHR42739">
    <property type="entry name" value="MALATE SYNTHASE G"/>
    <property type="match status" value="1"/>
</dbReference>
<dbReference type="PANTHER" id="PTHR42739:SF1">
    <property type="entry name" value="MALATE SYNTHASE G"/>
    <property type="match status" value="1"/>
</dbReference>
<dbReference type="Pfam" id="PF20659">
    <property type="entry name" value="MS_C"/>
    <property type="match status" value="1"/>
</dbReference>
<dbReference type="Pfam" id="PF20656">
    <property type="entry name" value="MS_N"/>
    <property type="match status" value="1"/>
</dbReference>
<dbReference type="Pfam" id="PF01274">
    <property type="entry name" value="MS_TIM-barrel"/>
    <property type="match status" value="1"/>
</dbReference>
<dbReference type="Pfam" id="PF20658">
    <property type="entry name" value="MSG_insertion"/>
    <property type="match status" value="1"/>
</dbReference>
<dbReference type="SUPFAM" id="SSF51645">
    <property type="entry name" value="Malate synthase G"/>
    <property type="match status" value="1"/>
</dbReference>
<feature type="chain" id="PRO_1000056908" description="Malate synthase G">
    <location>
        <begin position="1"/>
        <end position="731"/>
    </location>
</feature>
<feature type="active site" description="Proton acceptor" evidence="1">
    <location>
        <position position="342"/>
    </location>
</feature>
<feature type="active site" description="Proton donor" evidence="1">
    <location>
        <position position="636"/>
    </location>
</feature>
<feature type="binding site" evidence="1">
    <location>
        <position position="118"/>
    </location>
    <ligand>
        <name>acetyl-CoA</name>
        <dbReference type="ChEBI" id="CHEBI:57288"/>
    </ligand>
</feature>
<feature type="binding site" evidence="1">
    <location>
        <begin position="125"/>
        <end position="126"/>
    </location>
    <ligand>
        <name>acetyl-CoA</name>
        <dbReference type="ChEBI" id="CHEBI:57288"/>
    </ligand>
</feature>
<feature type="binding site" evidence="1">
    <location>
        <position position="277"/>
    </location>
    <ligand>
        <name>acetyl-CoA</name>
        <dbReference type="ChEBI" id="CHEBI:57288"/>
    </ligand>
</feature>
<feature type="binding site" evidence="1">
    <location>
        <position position="314"/>
    </location>
    <ligand>
        <name>acetyl-CoA</name>
        <dbReference type="ChEBI" id="CHEBI:57288"/>
    </ligand>
</feature>
<feature type="binding site" evidence="1">
    <location>
        <position position="342"/>
    </location>
    <ligand>
        <name>glyoxylate</name>
        <dbReference type="ChEBI" id="CHEBI:36655"/>
    </ligand>
</feature>
<feature type="binding site" evidence="1">
    <location>
        <position position="437"/>
    </location>
    <ligand>
        <name>glyoxylate</name>
        <dbReference type="ChEBI" id="CHEBI:36655"/>
    </ligand>
</feature>
<feature type="binding site" evidence="1">
    <location>
        <position position="437"/>
    </location>
    <ligand>
        <name>Mg(2+)</name>
        <dbReference type="ChEBI" id="CHEBI:18420"/>
    </ligand>
</feature>
<feature type="binding site" evidence="1">
    <location>
        <begin position="462"/>
        <end position="465"/>
    </location>
    <ligand>
        <name>glyoxylate</name>
        <dbReference type="ChEBI" id="CHEBI:36655"/>
    </ligand>
</feature>
<feature type="binding site" evidence="1">
    <location>
        <position position="465"/>
    </location>
    <ligand>
        <name>Mg(2+)</name>
        <dbReference type="ChEBI" id="CHEBI:18420"/>
    </ligand>
</feature>
<feature type="binding site" evidence="1">
    <location>
        <position position="546"/>
    </location>
    <ligand>
        <name>acetyl-CoA</name>
        <dbReference type="ChEBI" id="CHEBI:57288"/>
    </ligand>
</feature>
<feature type="modified residue" description="Cysteine sulfenic acid (-SOH)" evidence="1">
    <location>
        <position position="622"/>
    </location>
</feature>
<reference key="1">
    <citation type="submission" date="2006-12" db="EMBL/GenBank/DDBJ databases">
        <title>Complete sequence of chromosome of Mycobacterium sp. KMS.</title>
        <authorList>
            <consortium name="US DOE Joint Genome Institute"/>
            <person name="Copeland A."/>
            <person name="Lucas S."/>
            <person name="Lapidus A."/>
            <person name="Barry K."/>
            <person name="Detter J.C."/>
            <person name="Glavina del Rio T."/>
            <person name="Hammon N."/>
            <person name="Israni S."/>
            <person name="Dalin E."/>
            <person name="Tice H."/>
            <person name="Pitluck S."/>
            <person name="Kiss H."/>
            <person name="Brettin T."/>
            <person name="Bruce D."/>
            <person name="Han C."/>
            <person name="Tapia R."/>
            <person name="Gilna P."/>
            <person name="Schmutz J."/>
            <person name="Larimer F."/>
            <person name="Land M."/>
            <person name="Hauser L."/>
            <person name="Kyrpides N."/>
            <person name="Mikhailova N."/>
            <person name="Miller C.D."/>
            <person name="Richardson P."/>
        </authorList>
    </citation>
    <scope>NUCLEOTIDE SEQUENCE [LARGE SCALE GENOMIC DNA]</scope>
    <source>
        <strain>KMS</strain>
    </source>
</reference>
<proteinExistence type="inferred from homology"/>
<sequence length="731" mass="79921">MTDRVTVGNLRVARALYDFITDEALAGTDLDPDSFWSGVDKVVADLTPRNQELLARRDDLQAQIDKWHRQRAIGPHDADEYKQFLTEIGYLEPDPGDFTITTAGVDDEITTTAGPQLVVPVLNARFALNAANARWGSLYDALYGTDVISEEDGAEKGTSYNRVRGDKVIAYAREFLDGAAPLASGSYADATGFRIEDGQVQVELGDDQWVGLADPDQFVGYTGELGSPQWSILLRNNGLHIEILIDPDSPVGSTDKAGVKDVVLESAVTTIMDFEDSVAAVDAEDKVLGYRNWLGLNRGDLSEEVSKGDKTFTRVLNPDRTYTTPDGSGELTLPGRSLLFVRNVGHLMTNDAITDAEGNEVFEGIQDALFTGLIAMHGLKESDANGPLRNSRTGSVYIVKPKMHGPAEVAYTVDLFSRVEDVLGLPQNTLKVGIMDEERRTTLNLKACIKAAADRVVFINTGFLDRTGDEIHTSMEAGPMIRKGAMKSQPWIKAYEDQNVDVGLATGFSGRAQIGKGMWAMTDLMADMVEQKIGQPKAGATTAWVPSPTAATLHAMHYHQVDVYAVHKELEGKQRASLDDLLTIPLAKELAWAPEEIREEVDNNCQSILGYVVRWIDAGVGCSKVPDIHDIALMEDRATLRISSQLLANWLRHGVITEEDVKTSLRRMAAVVDEQNAKDPDFKPMATDPDSSIAFQAAQELILAGGTQPSGYTEPILHRRRREYKASVAGA</sequence>
<name>MASZ_MYCSK</name>